<protein>
    <recommendedName>
        <fullName evidence="1">tRNA(Phe) (4-demethylwyosine(37)-C(7)) aminocarboxypropyltransferase</fullName>
        <ecNumber evidence="1">2.5.1.114</ecNumber>
    </recommendedName>
    <alternativeName>
        <fullName>PhTYW2</fullName>
    </alternativeName>
    <alternativeName>
        <fullName evidence="1">tRNA wyosine derivatives biosynthesis protein Taw2</fullName>
    </alternativeName>
</protein>
<name>TYW2_PYRHO</name>
<evidence type="ECO:0000255" key="1">
    <source>
        <dbReference type="HAMAP-Rule" id="MF_01922"/>
    </source>
</evidence>
<evidence type="ECO:0000269" key="2">
    <source>
    </source>
</evidence>
<evidence type="ECO:0007829" key="3">
    <source>
        <dbReference type="PDB" id="3K6R"/>
    </source>
</evidence>
<dbReference type="EC" id="2.5.1.114" evidence="1"/>
<dbReference type="EMBL" id="BA000001">
    <property type="protein sequence ID" value="BAA29886.1"/>
    <property type="molecule type" value="Genomic_DNA"/>
</dbReference>
<dbReference type="PIR" id="D71128">
    <property type="entry name" value="D71128"/>
</dbReference>
<dbReference type="RefSeq" id="WP_010884887.1">
    <property type="nucleotide sequence ID" value="NC_000961.1"/>
</dbReference>
<dbReference type="PDB" id="3A25">
    <property type="method" value="X-ray"/>
    <property type="resolution" value="2.30 A"/>
    <property type="chains" value="A=1-278"/>
</dbReference>
<dbReference type="PDB" id="3A26">
    <property type="method" value="X-ray"/>
    <property type="resolution" value="2.50 A"/>
    <property type="chains" value="A=1-278"/>
</dbReference>
<dbReference type="PDB" id="3K6R">
    <property type="method" value="X-ray"/>
    <property type="resolution" value="2.10 A"/>
    <property type="chains" value="A=1-278"/>
</dbReference>
<dbReference type="PDBsum" id="3A25"/>
<dbReference type="PDBsum" id="3A26"/>
<dbReference type="PDBsum" id="3K6R"/>
<dbReference type="SMR" id="O58523"/>
<dbReference type="STRING" id="70601.gene:9377743"/>
<dbReference type="EnsemblBacteria" id="BAA29886">
    <property type="protein sequence ID" value="BAA29886"/>
    <property type="gene ID" value="BAA29886"/>
</dbReference>
<dbReference type="GeneID" id="1443122"/>
<dbReference type="KEGG" id="pho:PH0793"/>
<dbReference type="eggNOG" id="arCOG10124">
    <property type="taxonomic scope" value="Archaea"/>
</dbReference>
<dbReference type="OrthoDB" id="8079at2157"/>
<dbReference type="BioCyc" id="MetaCyc:MONOMER-18048"/>
<dbReference type="BRENDA" id="2.5.1.114">
    <property type="organism ID" value="5244"/>
</dbReference>
<dbReference type="EvolutionaryTrace" id="O58523"/>
<dbReference type="Proteomes" id="UP000000752">
    <property type="component" value="Chromosome"/>
</dbReference>
<dbReference type="GO" id="GO:0005737">
    <property type="term" value="C:cytoplasm"/>
    <property type="evidence" value="ECO:0007669"/>
    <property type="project" value="UniProtKB-SubCell"/>
</dbReference>
<dbReference type="GO" id="GO:0016765">
    <property type="term" value="F:transferase activity, transferring alkyl or aryl (other than methyl) groups"/>
    <property type="evidence" value="ECO:0000314"/>
    <property type="project" value="UniProtKB"/>
</dbReference>
<dbReference type="GO" id="GO:0102522">
    <property type="term" value="F:tRNA 4-demethylwyosine alpha-amino-alpha-carboxypropyltransferase activity"/>
    <property type="evidence" value="ECO:0007669"/>
    <property type="project" value="UniProtKB-EC"/>
</dbReference>
<dbReference type="GO" id="GO:0008175">
    <property type="term" value="F:tRNA methyltransferase activity"/>
    <property type="evidence" value="ECO:0007669"/>
    <property type="project" value="TreeGrafter"/>
</dbReference>
<dbReference type="GO" id="GO:0030488">
    <property type="term" value="P:tRNA methylation"/>
    <property type="evidence" value="ECO:0007669"/>
    <property type="project" value="TreeGrafter"/>
</dbReference>
<dbReference type="GO" id="GO:0006400">
    <property type="term" value="P:tRNA modification"/>
    <property type="evidence" value="ECO:0000314"/>
    <property type="project" value="UniProtKB"/>
</dbReference>
<dbReference type="CDD" id="cd02440">
    <property type="entry name" value="AdoMet_MTases"/>
    <property type="match status" value="1"/>
</dbReference>
<dbReference type="FunFam" id="3.30.300.110:FF:000008">
    <property type="entry name" value="tRNA(Phe) (4-demethylwyosine(37)-C(7)) aminocarboxypropyltransferase"/>
    <property type="match status" value="1"/>
</dbReference>
<dbReference type="FunFam" id="3.40.50.150:FF:000431">
    <property type="entry name" value="tRNA(Phe) (4-demethylwyosine(37)-C(7)) aminocarboxypropyltransferase"/>
    <property type="match status" value="1"/>
</dbReference>
<dbReference type="Gene3D" id="3.30.300.110">
    <property type="entry name" value="Met-10+ protein-like domains"/>
    <property type="match status" value="1"/>
</dbReference>
<dbReference type="Gene3D" id="3.40.50.150">
    <property type="entry name" value="Vaccinia Virus protein VP39"/>
    <property type="match status" value="1"/>
</dbReference>
<dbReference type="HAMAP" id="MF_01922">
    <property type="entry name" value="TYW2_archaea"/>
    <property type="match status" value="1"/>
</dbReference>
<dbReference type="InterPro" id="IPR030382">
    <property type="entry name" value="MeTrfase_TRM5/TYW2"/>
</dbReference>
<dbReference type="InterPro" id="IPR029063">
    <property type="entry name" value="SAM-dependent_MTases_sf"/>
</dbReference>
<dbReference type="InterPro" id="IPR056743">
    <property type="entry name" value="TRM5-TYW2-like_MTfase"/>
</dbReference>
<dbReference type="InterPro" id="IPR056744">
    <property type="entry name" value="TRM5/TYW2-like_N"/>
</dbReference>
<dbReference type="InterPro" id="IPR030867">
    <property type="entry name" value="TYW2_archaea"/>
</dbReference>
<dbReference type="NCBIfam" id="NF047823">
    <property type="entry name" value="tRNAwyosTaw2Pyroc"/>
    <property type="match status" value="1"/>
</dbReference>
<dbReference type="PANTHER" id="PTHR23245">
    <property type="entry name" value="TRNA METHYLTRANSFERASE"/>
    <property type="match status" value="1"/>
</dbReference>
<dbReference type="PANTHER" id="PTHR23245:SF41">
    <property type="entry name" value="TRNA(PHE) (4-DEMETHYLWYOSINE(37)-C(7)) AMINOCARBOXYPROPYLTRANSFERASE"/>
    <property type="match status" value="1"/>
</dbReference>
<dbReference type="Pfam" id="PF02475">
    <property type="entry name" value="TRM5-TYW2_MTfase"/>
    <property type="match status" value="1"/>
</dbReference>
<dbReference type="Pfam" id="PF25133">
    <property type="entry name" value="TYW2_N_2"/>
    <property type="match status" value="1"/>
</dbReference>
<dbReference type="SUPFAM" id="SSF53335">
    <property type="entry name" value="S-adenosyl-L-methionine-dependent methyltransferases"/>
    <property type="match status" value="1"/>
</dbReference>
<dbReference type="PROSITE" id="PS51684">
    <property type="entry name" value="SAM_MT_TRM5_TYW2"/>
    <property type="match status" value="1"/>
</dbReference>
<sequence length="278" mass="32151">MRTQGIKPRIREILSKELPEELVKLLPKRWVRIGDVLLLPLRPELEPYKHRIAEVYAEVLGVKTVLRKGHIHGETRKPDYELLYGSDTVTVHVENGIKYKLDVAKIMFSPANVKERVRMAKVAKPDELVVDMFAGIGHLSLPIAVYGKAKVIAIEKDPYTFKFLVENIHLNKVEDRMSAYNMDNRDFPGENIADRILMGYVVRTHEFIPKALSIAKDGAIIHYHNTVPEKLMPREPFETFKRITKEYGYDVEKLNELKIKRYAPGVWHVVLDLRVFKS</sequence>
<accession>O58523</accession>
<proteinExistence type="evidence at protein level"/>
<reference key="1">
    <citation type="journal article" date="1998" name="DNA Res.">
        <title>Complete sequence and gene organization of the genome of a hyper-thermophilic archaebacterium, Pyrococcus horikoshii OT3.</title>
        <authorList>
            <person name="Kawarabayasi Y."/>
            <person name="Sawada M."/>
            <person name="Horikawa H."/>
            <person name="Haikawa Y."/>
            <person name="Hino Y."/>
            <person name="Yamamoto S."/>
            <person name="Sekine M."/>
            <person name="Baba S."/>
            <person name="Kosugi H."/>
            <person name="Hosoyama A."/>
            <person name="Nagai Y."/>
            <person name="Sakai M."/>
            <person name="Ogura K."/>
            <person name="Otsuka R."/>
            <person name="Nakazawa H."/>
            <person name="Takamiya M."/>
            <person name="Ohfuku Y."/>
            <person name="Funahashi T."/>
            <person name="Tanaka T."/>
            <person name="Kudoh Y."/>
            <person name="Yamazaki J."/>
            <person name="Kushida N."/>
            <person name="Oguchi A."/>
            <person name="Aoki K."/>
            <person name="Yoshizawa T."/>
            <person name="Nakamura Y."/>
            <person name="Robb F.T."/>
            <person name="Horikoshi K."/>
            <person name="Masuchi Y."/>
            <person name="Shizuya H."/>
            <person name="Kikuchi H."/>
        </authorList>
    </citation>
    <scope>NUCLEOTIDE SEQUENCE [LARGE SCALE GENOMIC DNA]</scope>
    <source>
        <strain>ATCC 700860 / DSM 12428 / JCM 9974 / NBRC 100139 / OT-3</strain>
    </source>
</reference>
<reference key="2">
    <citation type="journal article" date="2010" name="Mol. Biol. Evol.">
        <title>Biosynthesis of wyosine derivatives in tRNA: an ancient and highly diverse pathway in Archaea.</title>
        <authorList>
            <person name="de Crecy-Lagard V."/>
            <person name="Brochier-Armanet C."/>
            <person name="Urbonavicius J."/>
            <person name="Fernandez B."/>
            <person name="Phillips G."/>
            <person name="Lyons B."/>
            <person name="Noma A."/>
            <person name="Alvarez S."/>
            <person name="Droogmans L."/>
            <person name="Armengaud J."/>
            <person name="Grosjean H."/>
        </authorList>
    </citation>
    <scope>GENE NAME</scope>
</reference>
<reference key="3">
    <citation type="journal article" date="2009" name="Proc. Natl. Acad. Sci. U.S.A.">
        <title>Structural basis of AdoMet-dependent aminocarboxypropyl transfer reaction catalyzed by tRNA-wybutosine synthesizing enzyme, TYW2.</title>
        <authorList>
            <person name="Umitsu M."/>
            <person name="Nishimasu H."/>
            <person name="Noma A."/>
            <person name="Suzuki T."/>
            <person name="Ishitani R."/>
            <person name="Nureki O."/>
        </authorList>
    </citation>
    <scope>X-RAY CRYSTALLOGRAPHY (2.30 ANGSTROMS) IN COMPLEXES WITH S-ADENOSYL-L-METHIONINE AND 5'-DEOXY-5'-METHYLTHIOADENOSINE</scope>
    <scope>FUNCTION</scope>
    <scope>CATALYTIC ACTIVITY</scope>
    <scope>PATHWAY</scope>
    <scope>MUTAGENESIS OF ARG-76; MET-107; ASN-112; ARG-116; HIS-138; PRO-142; GLU-155; ASP-183 AND GLY-199</scope>
</reference>
<reference key="4">
    <citation type="submission" date="2009-10" db="PDB data bank">
        <title>Crystal structure of protein PH0793 from Pyrococcus horikoshii.</title>
        <authorList>
            <consortium name="Midwest center for structural genomics (MCSG)"/>
        </authorList>
    </citation>
    <scope>X-RAY CRYSTALLOGRAPHY (2.10 ANGSTROMS)</scope>
</reference>
<comment type="function">
    <text evidence="1 2">S-adenosyl-L-methionine-dependent transferase that acts as a component of the wyosine derivatives biosynthesis pathway. Catalyzes the transfer of the alpha-amino-alpha-carboxypropyl (acp) group from S-adenosyl-L-methionine to 4-demethylwyosine (imG-14), forming 7-aminocarboxypropyl-demethylwyosine (wybutosine-86) at position 37 of tRNA(Phe).</text>
</comment>
<comment type="catalytic activity">
    <reaction evidence="1 2">
        <text>4-demethylwyosine(37) in tRNA(Phe) + S-adenosyl-L-methionine = 4-demethyl-7-[(3S)-3-amino-3-carboxypropyl]wyosine(37) in tRNA(Phe) + S-methyl-5'-thioadenosine + H(+)</text>
        <dbReference type="Rhea" id="RHEA:36355"/>
        <dbReference type="Rhea" id="RHEA-COMP:10164"/>
        <dbReference type="Rhea" id="RHEA-COMP:10378"/>
        <dbReference type="ChEBI" id="CHEBI:15378"/>
        <dbReference type="ChEBI" id="CHEBI:17509"/>
        <dbReference type="ChEBI" id="CHEBI:59789"/>
        <dbReference type="ChEBI" id="CHEBI:64315"/>
        <dbReference type="ChEBI" id="CHEBI:73550"/>
        <dbReference type="EC" id="2.5.1.114"/>
    </reaction>
</comment>
<comment type="subcellular location">
    <subcellularLocation>
        <location evidence="1">Cytoplasm</location>
    </subcellularLocation>
</comment>
<comment type="similarity">
    <text evidence="1">Belongs to the class I-like SAM-binding methyltransferase superfamily. TRM5/TYW2 family.</text>
</comment>
<organism>
    <name type="scientific">Pyrococcus horikoshii (strain ATCC 700860 / DSM 12428 / JCM 9974 / NBRC 100139 / OT-3)</name>
    <dbReference type="NCBI Taxonomy" id="70601"/>
    <lineage>
        <taxon>Archaea</taxon>
        <taxon>Methanobacteriati</taxon>
        <taxon>Methanobacteriota</taxon>
        <taxon>Thermococci</taxon>
        <taxon>Thermococcales</taxon>
        <taxon>Thermococcaceae</taxon>
        <taxon>Pyrococcus</taxon>
    </lineage>
</organism>
<feature type="chain" id="PRO_0000407849" description="tRNA(Phe) (4-demethylwyosine(37)-C(7)) aminocarboxypropyltransferase">
    <location>
        <begin position="1"/>
        <end position="278"/>
    </location>
</feature>
<feature type="binding site">
    <location>
        <position position="109"/>
    </location>
    <ligand>
        <name>S-adenosyl-L-methionine</name>
        <dbReference type="ChEBI" id="CHEBI:59789"/>
    </ligand>
</feature>
<feature type="binding site">
    <location>
        <position position="116"/>
    </location>
    <ligand>
        <name>S-adenosyl-L-methionine</name>
        <dbReference type="ChEBI" id="CHEBI:59789"/>
    </ligand>
</feature>
<feature type="binding site">
    <location>
        <position position="155"/>
    </location>
    <ligand>
        <name>S-adenosyl-L-methionine</name>
        <dbReference type="ChEBI" id="CHEBI:59789"/>
    </ligand>
</feature>
<feature type="binding site">
    <location>
        <begin position="183"/>
        <end position="184"/>
    </location>
    <ligand>
        <name>S-adenosyl-L-methionine</name>
        <dbReference type="ChEBI" id="CHEBI:59789"/>
    </ligand>
</feature>
<feature type="mutagenesis site" description="Loss of activity." evidence="2">
    <original>R</original>
    <variation>A</variation>
    <location>
        <position position="76"/>
    </location>
</feature>
<feature type="mutagenesis site" description="Decrease in activity." evidence="2">
    <original>M</original>
    <variation>A</variation>
    <location>
        <position position="107"/>
    </location>
</feature>
<feature type="mutagenesis site" description="Loss of activity." evidence="2">
    <original>N</original>
    <variation>A</variation>
    <location>
        <position position="112"/>
    </location>
</feature>
<feature type="mutagenesis site" description="Loss of activity." evidence="2">
    <original>R</original>
    <variation>A</variation>
    <location>
        <position position="116"/>
    </location>
</feature>
<feature type="mutagenesis site" description="Decrease in activity." evidence="2">
    <original>H</original>
    <variation>A</variation>
    <location>
        <position position="138"/>
    </location>
</feature>
<feature type="mutagenesis site" description="Decrease in activity." evidence="2">
    <original>P</original>
    <variation>A</variation>
    <location>
        <position position="142"/>
    </location>
</feature>
<feature type="mutagenesis site" description="Loss of activity." evidence="2">
    <original>E</original>
    <variation>A</variation>
    <location>
        <position position="155"/>
    </location>
</feature>
<feature type="mutagenesis site" description="Decrease in activity." evidence="2">
    <original>D</original>
    <variation>A</variation>
    <location>
        <position position="183"/>
    </location>
</feature>
<feature type="mutagenesis site" description="Decrease in activity." evidence="2">
    <original>G</original>
    <variation>N</variation>
    <location>
        <position position="199"/>
    </location>
</feature>
<feature type="helix" evidence="3">
    <location>
        <begin position="7"/>
        <end position="14"/>
    </location>
</feature>
<feature type="turn" evidence="3">
    <location>
        <begin position="15"/>
        <end position="17"/>
    </location>
</feature>
<feature type="helix" evidence="3">
    <location>
        <begin position="20"/>
        <end position="25"/>
    </location>
</feature>
<feature type="strand" evidence="3">
    <location>
        <begin position="31"/>
        <end position="33"/>
    </location>
</feature>
<feature type="strand" evidence="3">
    <location>
        <begin position="36"/>
        <end position="39"/>
    </location>
</feature>
<feature type="helix" evidence="3">
    <location>
        <begin position="46"/>
        <end position="48"/>
    </location>
</feature>
<feature type="helix" evidence="3">
    <location>
        <begin position="49"/>
        <end position="60"/>
    </location>
</feature>
<feature type="strand" evidence="3">
    <location>
        <begin position="63"/>
        <end position="67"/>
    </location>
</feature>
<feature type="strand" evidence="3">
    <location>
        <begin position="81"/>
        <end position="84"/>
    </location>
</feature>
<feature type="strand" evidence="3">
    <location>
        <begin position="89"/>
        <end position="94"/>
    </location>
</feature>
<feature type="strand" evidence="3">
    <location>
        <begin position="97"/>
        <end position="102"/>
    </location>
</feature>
<feature type="turn" evidence="3">
    <location>
        <begin position="103"/>
        <end position="105"/>
    </location>
</feature>
<feature type="helix" evidence="3">
    <location>
        <begin position="110"/>
        <end position="112"/>
    </location>
</feature>
<feature type="helix" evidence="3">
    <location>
        <begin position="113"/>
        <end position="122"/>
    </location>
</feature>
<feature type="strand" evidence="3">
    <location>
        <begin position="128"/>
        <end position="131"/>
    </location>
</feature>
<feature type="turn" evidence="3">
    <location>
        <begin position="135"/>
        <end position="139"/>
    </location>
</feature>
<feature type="helix" evidence="3">
    <location>
        <begin position="140"/>
        <end position="145"/>
    </location>
</feature>
<feature type="strand" evidence="3">
    <location>
        <begin position="150"/>
        <end position="154"/>
    </location>
</feature>
<feature type="helix" evidence="3">
    <location>
        <begin position="158"/>
        <end position="170"/>
    </location>
</feature>
<feature type="turn" evidence="3">
    <location>
        <begin position="174"/>
        <end position="176"/>
    </location>
</feature>
<feature type="strand" evidence="3">
    <location>
        <begin position="177"/>
        <end position="180"/>
    </location>
</feature>
<feature type="turn" evidence="3">
    <location>
        <begin position="184"/>
        <end position="186"/>
    </location>
</feature>
<feature type="strand" evidence="3">
    <location>
        <begin position="193"/>
        <end position="198"/>
    </location>
</feature>
<feature type="helix" evidence="3">
    <location>
        <begin position="204"/>
        <end position="207"/>
    </location>
</feature>
<feature type="helix" evidence="3">
    <location>
        <begin position="208"/>
        <end position="214"/>
    </location>
</feature>
<feature type="strand" evidence="3">
    <location>
        <begin position="215"/>
        <end position="228"/>
    </location>
</feature>
<feature type="helix" evidence="3">
    <location>
        <begin position="229"/>
        <end position="231"/>
    </location>
</feature>
<feature type="turn" evidence="3">
    <location>
        <begin position="232"/>
        <end position="236"/>
    </location>
</feature>
<feature type="helix" evidence="3">
    <location>
        <begin position="237"/>
        <end position="246"/>
    </location>
</feature>
<feature type="strand" evidence="3">
    <location>
        <begin position="250"/>
        <end position="262"/>
    </location>
</feature>
<feature type="turn" evidence="3">
    <location>
        <begin position="263"/>
        <end position="265"/>
    </location>
</feature>
<feature type="strand" evidence="3">
    <location>
        <begin position="266"/>
        <end position="276"/>
    </location>
</feature>
<gene>
    <name evidence="1" type="primary">taw2</name>
    <name type="ordered locus">PH0793</name>
</gene>
<keyword id="KW-0002">3D-structure</keyword>
<keyword id="KW-0963">Cytoplasm</keyword>
<keyword id="KW-0949">S-adenosyl-L-methionine</keyword>
<keyword id="KW-0808">Transferase</keyword>
<keyword id="KW-0819">tRNA processing</keyword>